<protein>
    <recommendedName>
        <fullName evidence="1">Large ribosomal subunit protein uL6</fullName>
    </recommendedName>
    <alternativeName>
        <fullName evidence="3">50S ribosomal protein L6</fullName>
    </alternativeName>
</protein>
<sequence length="177" mass="18995">MSRVAKAPVSIPAGVEVTLNEQTLTVKGAKGSLTRVINNAVNVVIEDGVVKFLPVEGVVNAWAQAGTTRALVNNMVVGVSQGFERKLKLVGVGYRAKLVGADIDLTLGFSHPLVHKLPAGVTAECPSQTDIVLRGVDKQLIGQVAAEIRGYRPPEPYKGKGVRYDDEEVRRKEAKKK</sequence>
<feature type="chain" id="PRO_1000055308" description="Large ribosomal subunit protein uL6">
    <location>
        <begin position="1"/>
        <end position="177"/>
    </location>
</feature>
<feature type="region of interest" description="Disordered" evidence="2">
    <location>
        <begin position="152"/>
        <end position="177"/>
    </location>
</feature>
<feature type="compositionally biased region" description="Basic and acidic residues" evidence="2">
    <location>
        <begin position="152"/>
        <end position="171"/>
    </location>
</feature>
<name>RL6_SHESW</name>
<proteinExistence type="inferred from homology"/>
<keyword id="KW-0687">Ribonucleoprotein</keyword>
<keyword id="KW-0689">Ribosomal protein</keyword>
<keyword id="KW-0694">RNA-binding</keyword>
<keyword id="KW-0699">rRNA-binding</keyword>
<evidence type="ECO:0000255" key="1">
    <source>
        <dbReference type="HAMAP-Rule" id="MF_01365"/>
    </source>
</evidence>
<evidence type="ECO:0000256" key="2">
    <source>
        <dbReference type="SAM" id="MobiDB-lite"/>
    </source>
</evidence>
<evidence type="ECO:0000305" key="3"/>
<comment type="function">
    <text evidence="1">This protein binds to the 23S rRNA, and is important in its secondary structure. It is located near the subunit interface in the base of the L7/L12 stalk, and near the tRNA binding site of the peptidyltransferase center.</text>
</comment>
<comment type="subunit">
    <text evidence="1">Part of the 50S ribosomal subunit.</text>
</comment>
<comment type="similarity">
    <text evidence="1">Belongs to the universal ribosomal protein uL6 family.</text>
</comment>
<dbReference type="EMBL" id="CP000503">
    <property type="protein sequence ID" value="ABM23024.1"/>
    <property type="molecule type" value="Genomic_DNA"/>
</dbReference>
<dbReference type="RefSeq" id="WP_011787578.1">
    <property type="nucleotide sequence ID" value="NC_008750.1"/>
</dbReference>
<dbReference type="SMR" id="A1REC9"/>
<dbReference type="GeneID" id="67441775"/>
<dbReference type="KEGG" id="shw:Sputw3181_0171"/>
<dbReference type="HOGENOM" id="CLU_065464_1_2_6"/>
<dbReference type="Proteomes" id="UP000002597">
    <property type="component" value="Chromosome"/>
</dbReference>
<dbReference type="GO" id="GO:0022625">
    <property type="term" value="C:cytosolic large ribosomal subunit"/>
    <property type="evidence" value="ECO:0007669"/>
    <property type="project" value="TreeGrafter"/>
</dbReference>
<dbReference type="GO" id="GO:0019843">
    <property type="term" value="F:rRNA binding"/>
    <property type="evidence" value="ECO:0007669"/>
    <property type="project" value="UniProtKB-UniRule"/>
</dbReference>
<dbReference type="GO" id="GO:0003735">
    <property type="term" value="F:structural constituent of ribosome"/>
    <property type="evidence" value="ECO:0007669"/>
    <property type="project" value="InterPro"/>
</dbReference>
<dbReference type="GO" id="GO:0002181">
    <property type="term" value="P:cytoplasmic translation"/>
    <property type="evidence" value="ECO:0007669"/>
    <property type="project" value="TreeGrafter"/>
</dbReference>
<dbReference type="FunFam" id="3.90.930.12:FF:000001">
    <property type="entry name" value="50S ribosomal protein L6"/>
    <property type="match status" value="1"/>
</dbReference>
<dbReference type="FunFam" id="3.90.930.12:FF:000002">
    <property type="entry name" value="50S ribosomal protein L6"/>
    <property type="match status" value="1"/>
</dbReference>
<dbReference type="Gene3D" id="3.90.930.12">
    <property type="entry name" value="Ribosomal protein L6, alpha-beta domain"/>
    <property type="match status" value="2"/>
</dbReference>
<dbReference type="HAMAP" id="MF_01365_B">
    <property type="entry name" value="Ribosomal_uL6_B"/>
    <property type="match status" value="1"/>
</dbReference>
<dbReference type="InterPro" id="IPR000702">
    <property type="entry name" value="Ribosomal_uL6-like"/>
</dbReference>
<dbReference type="InterPro" id="IPR036789">
    <property type="entry name" value="Ribosomal_uL6-like_a/b-dom_sf"/>
</dbReference>
<dbReference type="InterPro" id="IPR020040">
    <property type="entry name" value="Ribosomal_uL6_a/b-dom"/>
</dbReference>
<dbReference type="InterPro" id="IPR019906">
    <property type="entry name" value="Ribosomal_uL6_bac-type"/>
</dbReference>
<dbReference type="InterPro" id="IPR002358">
    <property type="entry name" value="Ribosomal_uL6_CS"/>
</dbReference>
<dbReference type="NCBIfam" id="TIGR03654">
    <property type="entry name" value="L6_bact"/>
    <property type="match status" value="1"/>
</dbReference>
<dbReference type="PANTHER" id="PTHR11655">
    <property type="entry name" value="60S/50S RIBOSOMAL PROTEIN L6/L9"/>
    <property type="match status" value="1"/>
</dbReference>
<dbReference type="PANTHER" id="PTHR11655:SF14">
    <property type="entry name" value="LARGE RIBOSOMAL SUBUNIT PROTEIN UL6M"/>
    <property type="match status" value="1"/>
</dbReference>
<dbReference type="Pfam" id="PF00347">
    <property type="entry name" value="Ribosomal_L6"/>
    <property type="match status" value="2"/>
</dbReference>
<dbReference type="PIRSF" id="PIRSF002162">
    <property type="entry name" value="Ribosomal_L6"/>
    <property type="match status" value="1"/>
</dbReference>
<dbReference type="PRINTS" id="PR00059">
    <property type="entry name" value="RIBOSOMALL6"/>
</dbReference>
<dbReference type="SUPFAM" id="SSF56053">
    <property type="entry name" value="Ribosomal protein L6"/>
    <property type="match status" value="2"/>
</dbReference>
<dbReference type="PROSITE" id="PS00525">
    <property type="entry name" value="RIBOSOMAL_L6_1"/>
    <property type="match status" value="1"/>
</dbReference>
<reference key="1">
    <citation type="submission" date="2006-12" db="EMBL/GenBank/DDBJ databases">
        <title>Complete sequence of Shewanella sp. W3-18-1.</title>
        <authorList>
            <consortium name="US DOE Joint Genome Institute"/>
            <person name="Copeland A."/>
            <person name="Lucas S."/>
            <person name="Lapidus A."/>
            <person name="Barry K."/>
            <person name="Detter J.C."/>
            <person name="Glavina del Rio T."/>
            <person name="Hammon N."/>
            <person name="Israni S."/>
            <person name="Dalin E."/>
            <person name="Tice H."/>
            <person name="Pitluck S."/>
            <person name="Chain P."/>
            <person name="Malfatti S."/>
            <person name="Shin M."/>
            <person name="Vergez L."/>
            <person name="Schmutz J."/>
            <person name="Larimer F."/>
            <person name="Land M."/>
            <person name="Hauser L."/>
            <person name="Kyrpides N."/>
            <person name="Lykidis A."/>
            <person name="Tiedje J."/>
            <person name="Richardson P."/>
        </authorList>
    </citation>
    <scope>NUCLEOTIDE SEQUENCE [LARGE SCALE GENOMIC DNA]</scope>
    <source>
        <strain>W3-18-1</strain>
    </source>
</reference>
<gene>
    <name evidence="1" type="primary">rplF</name>
    <name type="ordered locus">Sputw3181_0171</name>
</gene>
<organism>
    <name type="scientific">Shewanella sp. (strain W3-18-1)</name>
    <dbReference type="NCBI Taxonomy" id="351745"/>
    <lineage>
        <taxon>Bacteria</taxon>
        <taxon>Pseudomonadati</taxon>
        <taxon>Pseudomonadota</taxon>
        <taxon>Gammaproteobacteria</taxon>
        <taxon>Alteromonadales</taxon>
        <taxon>Shewanellaceae</taxon>
        <taxon>Shewanella</taxon>
    </lineage>
</organism>
<accession>A1REC9</accession>